<dbReference type="EC" id="4.2.1.33" evidence="1"/>
<dbReference type="EMBL" id="AP009510">
    <property type="protein sequence ID" value="BAG13938.1"/>
    <property type="molecule type" value="Genomic_DNA"/>
</dbReference>
<dbReference type="RefSeq" id="WP_015423464.1">
    <property type="nucleotide sequence ID" value="NC_020419.1"/>
</dbReference>
<dbReference type="SMR" id="B1H0A6"/>
<dbReference type="STRING" id="471821.TGRD_455"/>
<dbReference type="KEGG" id="rsd:TGRD_455"/>
<dbReference type="PATRIC" id="fig|471821.5.peg.737"/>
<dbReference type="HOGENOM" id="CLU_006714_3_4_0"/>
<dbReference type="UniPathway" id="UPA00048">
    <property type="reaction ID" value="UER00071"/>
</dbReference>
<dbReference type="Proteomes" id="UP000001691">
    <property type="component" value="Chromosome"/>
</dbReference>
<dbReference type="GO" id="GO:0003861">
    <property type="term" value="F:3-isopropylmalate dehydratase activity"/>
    <property type="evidence" value="ECO:0007669"/>
    <property type="project" value="UniProtKB-UniRule"/>
</dbReference>
<dbReference type="GO" id="GO:0051539">
    <property type="term" value="F:4 iron, 4 sulfur cluster binding"/>
    <property type="evidence" value="ECO:0007669"/>
    <property type="project" value="UniProtKB-KW"/>
</dbReference>
<dbReference type="GO" id="GO:0046872">
    <property type="term" value="F:metal ion binding"/>
    <property type="evidence" value="ECO:0007669"/>
    <property type="project" value="UniProtKB-KW"/>
</dbReference>
<dbReference type="GO" id="GO:0009098">
    <property type="term" value="P:L-leucine biosynthetic process"/>
    <property type="evidence" value="ECO:0007669"/>
    <property type="project" value="UniProtKB-UniRule"/>
</dbReference>
<dbReference type="CDD" id="cd01583">
    <property type="entry name" value="IPMI"/>
    <property type="match status" value="1"/>
</dbReference>
<dbReference type="Gene3D" id="3.30.499.10">
    <property type="entry name" value="Aconitase, domain 3"/>
    <property type="match status" value="2"/>
</dbReference>
<dbReference type="HAMAP" id="MF_01027">
    <property type="entry name" value="LeuC_type2"/>
    <property type="match status" value="1"/>
</dbReference>
<dbReference type="InterPro" id="IPR015931">
    <property type="entry name" value="Acnase/IPM_dHydase_lsu_aba_1/3"/>
</dbReference>
<dbReference type="InterPro" id="IPR001030">
    <property type="entry name" value="Acoase/IPM_deHydtase_lsu_aba"/>
</dbReference>
<dbReference type="InterPro" id="IPR018136">
    <property type="entry name" value="Aconitase_4Fe-4S_BS"/>
</dbReference>
<dbReference type="InterPro" id="IPR036008">
    <property type="entry name" value="Aconitase_4Fe-4S_dom"/>
</dbReference>
<dbReference type="InterPro" id="IPR011826">
    <property type="entry name" value="HAcnase/IPMdehydase_lsu_prok"/>
</dbReference>
<dbReference type="InterPro" id="IPR006251">
    <property type="entry name" value="Homoacnase/IPMdehydase_lsu"/>
</dbReference>
<dbReference type="InterPro" id="IPR050067">
    <property type="entry name" value="IPM_dehydratase_rel_enz"/>
</dbReference>
<dbReference type="InterPro" id="IPR033941">
    <property type="entry name" value="IPMI_cat"/>
</dbReference>
<dbReference type="InterPro" id="IPR011823">
    <property type="entry name" value="IsopropMal_deHydtase_lsu_bac"/>
</dbReference>
<dbReference type="NCBIfam" id="TIGR01343">
    <property type="entry name" value="hacA_fam"/>
    <property type="match status" value="1"/>
</dbReference>
<dbReference type="NCBIfam" id="TIGR02086">
    <property type="entry name" value="IPMI_arch"/>
    <property type="match status" value="1"/>
</dbReference>
<dbReference type="NCBIfam" id="TIGR02083">
    <property type="entry name" value="LEU2"/>
    <property type="match status" value="1"/>
</dbReference>
<dbReference type="NCBIfam" id="NF001614">
    <property type="entry name" value="PRK00402.1"/>
    <property type="match status" value="1"/>
</dbReference>
<dbReference type="PANTHER" id="PTHR43822:SF16">
    <property type="entry name" value="3-ISOPROPYLMALATE DEHYDRATASE LARGE SUBUNIT 2"/>
    <property type="match status" value="1"/>
</dbReference>
<dbReference type="PANTHER" id="PTHR43822">
    <property type="entry name" value="HOMOACONITASE, MITOCHONDRIAL-RELATED"/>
    <property type="match status" value="1"/>
</dbReference>
<dbReference type="Pfam" id="PF00330">
    <property type="entry name" value="Aconitase"/>
    <property type="match status" value="2"/>
</dbReference>
<dbReference type="PRINTS" id="PR00415">
    <property type="entry name" value="ACONITASE"/>
</dbReference>
<dbReference type="SUPFAM" id="SSF53732">
    <property type="entry name" value="Aconitase iron-sulfur domain"/>
    <property type="match status" value="1"/>
</dbReference>
<dbReference type="PROSITE" id="PS00450">
    <property type="entry name" value="ACONITASE_1"/>
    <property type="match status" value="1"/>
</dbReference>
<dbReference type="PROSITE" id="PS01244">
    <property type="entry name" value="ACONITASE_2"/>
    <property type="match status" value="1"/>
</dbReference>
<sequence length="420" mass="45678">MGNTITEKILASHCGKKVVEPGEFIEPKIDIALSNDVTAPLAVKEFRKTGIKKVFDKNKIALVMDHFTPNKDILSAEHVKFVREFAKEHKIKHYYEGGNVGVEHALLPEKGIVVPGDVIIGADSHTCTYGALGAFSTGGGSTDIAAAMATGKIWFKVPNSIKFILNRKLNKWVSGKDIILYIIGLIGVDGALYNSMEFDGPLCKKLTMADRFTITNMAIEAGGKNGIFTPDEITENYVAKRAQRKYKFYISDKDAKYLKIYEIDCSKILPQVSMPFLPSNTKAVKDIKKTYIDQVVIGSCTNGRIEDLRVAASIIKKGKKVNSNVRTLIIPATPEVYSQALDEGLLRIFMDAGAIISAPTCGPCLGGHMGILASGEKCASTTNRNFRGRMGHVESQLFLVNPAVAAASAIKGYIASPDEI</sequence>
<gene>
    <name evidence="1" type="primary">leuC</name>
    <name type="ordered locus">TGRD_455</name>
</gene>
<evidence type="ECO:0000255" key="1">
    <source>
        <dbReference type="HAMAP-Rule" id="MF_01027"/>
    </source>
</evidence>
<keyword id="KW-0004">4Fe-4S</keyword>
<keyword id="KW-0028">Amino-acid biosynthesis</keyword>
<keyword id="KW-0100">Branched-chain amino acid biosynthesis</keyword>
<keyword id="KW-0408">Iron</keyword>
<keyword id="KW-0411">Iron-sulfur</keyword>
<keyword id="KW-0432">Leucine biosynthesis</keyword>
<keyword id="KW-0456">Lyase</keyword>
<keyword id="KW-0479">Metal-binding</keyword>
<proteinExistence type="inferred from homology"/>
<accession>B1H0A6</accession>
<comment type="function">
    <text evidence="1">Catalyzes the isomerization between 2-isopropylmalate and 3-isopropylmalate, via the formation of 2-isopropylmaleate.</text>
</comment>
<comment type="catalytic activity">
    <reaction evidence="1">
        <text>(2R,3S)-3-isopropylmalate = (2S)-2-isopropylmalate</text>
        <dbReference type="Rhea" id="RHEA:32287"/>
        <dbReference type="ChEBI" id="CHEBI:1178"/>
        <dbReference type="ChEBI" id="CHEBI:35121"/>
        <dbReference type="EC" id="4.2.1.33"/>
    </reaction>
</comment>
<comment type="cofactor">
    <cofactor evidence="1">
        <name>[4Fe-4S] cluster</name>
        <dbReference type="ChEBI" id="CHEBI:49883"/>
    </cofactor>
    <text evidence="1">Binds 1 [4Fe-4S] cluster per subunit.</text>
</comment>
<comment type="pathway">
    <text evidence="1">Amino-acid biosynthesis; L-leucine biosynthesis; L-leucine from 3-methyl-2-oxobutanoate: step 2/4.</text>
</comment>
<comment type="subunit">
    <text evidence="1">Heterodimer of LeuC and LeuD.</text>
</comment>
<comment type="similarity">
    <text evidence="1">Belongs to the aconitase/IPM isomerase family. LeuC type 2 subfamily.</text>
</comment>
<protein>
    <recommendedName>
        <fullName evidence="1">3-isopropylmalate dehydratase large subunit</fullName>
        <ecNumber evidence="1">4.2.1.33</ecNumber>
    </recommendedName>
    <alternativeName>
        <fullName evidence="1">Alpha-IPM isomerase</fullName>
        <shortName evidence="1">IPMI</shortName>
    </alternativeName>
    <alternativeName>
        <fullName evidence="1">Isopropylmalate isomerase</fullName>
    </alternativeName>
</protein>
<feature type="chain" id="PRO_1000135741" description="3-isopropylmalate dehydratase large subunit">
    <location>
        <begin position="1"/>
        <end position="420"/>
    </location>
</feature>
<feature type="binding site" evidence="1">
    <location>
        <position position="300"/>
    </location>
    <ligand>
        <name>[4Fe-4S] cluster</name>
        <dbReference type="ChEBI" id="CHEBI:49883"/>
    </ligand>
</feature>
<feature type="binding site" evidence="1">
    <location>
        <position position="361"/>
    </location>
    <ligand>
        <name>[4Fe-4S] cluster</name>
        <dbReference type="ChEBI" id="CHEBI:49883"/>
    </ligand>
</feature>
<feature type="binding site" evidence="1">
    <location>
        <position position="364"/>
    </location>
    <ligand>
        <name>[4Fe-4S] cluster</name>
        <dbReference type="ChEBI" id="CHEBI:49883"/>
    </ligand>
</feature>
<reference key="1">
    <citation type="journal article" date="2008" name="Proc. Natl. Acad. Sci. U.S.A.">
        <title>Complete genome of the uncultured termite group 1 bacteria in a single host protist cell.</title>
        <authorList>
            <person name="Hongoh Y."/>
            <person name="Sharma V.K."/>
            <person name="Prakash T."/>
            <person name="Noda S."/>
            <person name="Taylor T.D."/>
            <person name="Kudo T."/>
            <person name="Sakaki Y."/>
            <person name="Toyoda A."/>
            <person name="Hattori M."/>
            <person name="Ohkuma M."/>
        </authorList>
    </citation>
    <scope>NUCLEOTIDE SEQUENCE [LARGE SCALE GENOMIC DNA]</scope>
</reference>
<name>LEUC_ENDTX</name>
<organism>
    <name type="scientific">Endomicrobium trichonymphae</name>
    <dbReference type="NCBI Taxonomy" id="1408204"/>
    <lineage>
        <taxon>Bacteria</taxon>
        <taxon>Pseudomonadati</taxon>
        <taxon>Elusimicrobiota</taxon>
        <taxon>Endomicrobiia</taxon>
        <taxon>Endomicrobiales</taxon>
        <taxon>Endomicrobiaceae</taxon>
        <taxon>Candidatus Endomicrobiellum</taxon>
    </lineage>
</organism>